<evidence type="ECO:0000255" key="1">
    <source>
        <dbReference type="HAMAP-Rule" id="MF_00270"/>
    </source>
</evidence>
<evidence type="ECO:0000305" key="2"/>
<dbReference type="EMBL" id="CP000713">
    <property type="protein sequence ID" value="ABQ94581.1"/>
    <property type="molecule type" value="Genomic_DNA"/>
</dbReference>
<dbReference type="SMR" id="A5WFZ0"/>
<dbReference type="STRING" id="349106.PsycPRwf_1641"/>
<dbReference type="KEGG" id="prw:PsycPRwf_1641"/>
<dbReference type="eggNOG" id="COG0238">
    <property type="taxonomic scope" value="Bacteria"/>
</dbReference>
<dbReference type="HOGENOM" id="CLU_148710_2_3_6"/>
<dbReference type="GO" id="GO:0022627">
    <property type="term" value="C:cytosolic small ribosomal subunit"/>
    <property type="evidence" value="ECO:0007669"/>
    <property type="project" value="TreeGrafter"/>
</dbReference>
<dbReference type="GO" id="GO:0070181">
    <property type="term" value="F:small ribosomal subunit rRNA binding"/>
    <property type="evidence" value="ECO:0007669"/>
    <property type="project" value="TreeGrafter"/>
</dbReference>
<dbReference type="GO" id="GO:0003735">
    <property type="term" value="F:structural constituent of ribosome"/>
    <property type="evidence" value="ECO:0007669"/>
    <property type="project" value="InterPro"/>
</dbReference>
<dbReference type="GO" id="GO:0006412">
    <property type="term" value="P:translation"/>
    <property type="evidence" value="ECO:0007669"/>
    <property type="project" value="UniProtKB-UniRule"/>
</dbReference>
<dbReference type="FunFam" id="4.10.640.10:FF:000001">
    <property type="entry name" value="30S ribosomal protein S18"/>
    <property type="match status" value="1"/>
</dbReference>
<dbReference type="Gene3D" id="4.10.640.10">
    <property type="entry name" value="Ribosomal protein S18"/>
    <property type="match status" value="1"/>
</dbReference>
<dbReference type="HAMAP" id="MF_00270">
    <property type="entry name" value="Ribosomal_bS18"/>
    <property type="match status" value="1"/>
</dbReference>
<dbReference type="InterPro" id="IPR001648">
    <property type="entry name" value="Ribosomal_bS18"/>
</dbReference>
<dbReference type="InterPro" id="IPR018275">
    <property type="entry name" value="Ribosomal_bS18_CS"/>
</dbReference>
<dbReference type="InterPro" id="IPR036870">
    <property type="entry name" value="Ribosomal_bS18_sf"/>
</dbReference>
<dbReference type="NCBIfam" id="TIGR00165">
    <property type="entry name" value="S18"/>
    <property type="match status" value="1"/>
</dbReference>
<dbReference type="PANTHER" id="PTHR13479">
    <property type="entry name" value="30S RIBOSOMAL PROTEIN S18"/>
    <property type="match status" value="1"/>
</dbReference>
<dbReference type="PANTHER" id="PTHR13479:SF40">
    <property type="entry name" value="SMALL RIBOSOMAL SUBUNIT PROTEIN BS18M"/>
    <property type="match status" value="1"/>
</dbReference>
<dbReference type="Pfam" id="PF01084">
    <property type="entry name" value="Ribosomal_S18"/>
    <property type="match status" value="1"/>
</dbReference>
<dbReference type="PRINTS" id="PR00974">
    <property type="entry name" value="RIBOSOMALS18"/>
</dbReference>
<dbReference type="SUPFAM" id="SSF46911">
    <property type="entry name" value="Ribosomal protein S18"/>
    <property type="match status" value="1"/>
</dbReference>
<dbReference type="PROSITE" id="PS00057">
    <property type="entry name" value="RIBOSOMAL_S18"/>
    <property type="match status" value="1"/>
</dbReference>
<reference key="1">
    <citation type="submission" date="2007-05" db="EMBL/GenBank/DDBJ databases">
        <title>Complete sequence of chromosome of Psychrobacter sp. PRwf-1.</title>
        <authorList>
            <consortium name="US DOE Joint Genome Institute"/>
            <person name="Copeland A."/>
            <person name="Lucas S."/>
            <person name="Lapidus A."/>
            <person name="Barry K."/>
            <person name="Detter J.C."/>
            <person name="Glavina del Rio T."/>
            <person name="Hammon N."/>
            <person name="Israni S."/>
            <person name="Dalin E."/>
            <person name="Tice H."/>
            <person name="Pitluck S."/>
            <person name="Chain P."/>
            <person name="Malfatti S."/>
            <person name="Shin M."/>
            <person name="Vergez L."/>
            <person name="Schmutz J."/>
            <person name="Larimer F."/>
            <person name="Land M."/>
            <person name="Hauser L."/>
            <person name="Kyrpides N."/>
            <person name="Kim E."/>
            <person name="Tiedje J."/>
            <person name="Richardson P."/>
        </authorList>
    </citation>
    <scope>NUCLEOTIDE SEQUENCE [LARGE SCALE GENOMIC DNA]</scope>
    <source>
        <strain>PRwf-1</strain>
    </source>
</reference>
<organism>
    <name type="scientific">Psychrobacter sp. (strain PRwf-1)</name>
    <dbReference type="NCBI Taxonomy" id="349106"/>
    <lineage>
        <taxon>Bacteria</taxon>
        <taxon>Pseudomonadati</taxon>
        <taxon>Pseudomonadota</taxon>
        <taxon>Gammaproteobacteria</taxon>
        <taxon>Moraxellales</taxon>
        <taxon>Moraxellaceae</taxon>
        <taxon>Psychrobacter</taxon>
    </lineage>
</organism>
<keyword id="KW-0687">Ribonucleoprotein</keyword>
<keyword id="KW-0689">Ribosomal protein</keyword>
<keyword id="KW-0694">RNA-binding</keyword>
<keyword id="KW-0699">rRNA-binding</keyword>
<accession>A5WFZ0</accession>
<comment type="function">
    <text evidence="1">Binds as a heterodimer with protein bS6 to the central domain of the 16S rRNA, where it helps stabilize the platform of the 30S subunit.</text>
</comment>
<comment type="subunit">
    <text evidence="1">Part of the 30S ribosomal subunit. Forms a tight heterodimer with protein bS6.</text>
</comment>
<comment type="similarity">
    <text evidence="1">Belongs to the bacterial ribosomal protein bS18 family.</text>
</comment>
<feature type="chain" id="PRO_1000071900" description="Small ribosomal subunit protein bS18">
    <location>
        <begin position="1"/>
        <end position="75"/>
    </location>
</feature>
<sequence>MARFYRRRKFCRFTAEGITHIDYKDVELLKQYISDNGKIVPSRITGTSNKYQRQLATAIKQARYLALLPYTDNHQ</sequence>
<protein>
    <recommendedName>
        <fullName evidence="1">Small ribosomal subunit protein bS18</fullName>
    </recommendedName>
    <alternativeName>
        <fullName evidence="2">30S ribosomal protein S18</fullName>
    </alternativeName>
</protein>
<name>RS18_PSYWF</name>
<proteinExistence type="inferred from homology"/>
<gene>
    <name evidence="1" type="primary">rpsR</name>
    <name type="ordered locus">PsycPRwf_1641</name>
</gene>